<gene>
    <name type="primary">YRB2</name>
    <name type="ordered locus">YIL063C</name>
</gene>
<evidence type="ECO:0000255" key="1">
    <source>
        <dbReference type="PROSITE-ProRule" id="PRU00164"/>
    </source>
</evidence>
<evidence type="ECO:0000256" key="2">
    <source>
        <dbReference type="SAM" id="MobiDB-lite"/>
    </source>
</evidence>
<evidence type="ECO:0000269" key="3">
    <source>
    </source>
</evidence>
<evidence type="ECO:0000269" key="4">
    <source>
    </source>
</evidence>
<evidence type="ECO:0007744" key="5">
    <source>
    </source>
</evidence>
<evidence type="ECO:0007829" key="6">
    <source>
        <dbReference type="PDB" id="3WYF"/>
    </source>
</evidence>
<dbReference type="EMBL" id="Z38060">
    <property type="protein sequence ID" value="CAA86160.1"/>
    <property type="molecule type" value="Genomic_DNA"/>
</dbReference>
<dbReference type="EMBL" id="AY557879">
    <property type="protein sequence ID" value="AAS56205.1"/>
    <property type="molecule type" value="Genomic_DNA"/>
</dbReference>
<dbReference type="EMBL" id="BK006942">
    <property type="protein sequence ID" value="DAA08487.1"/>
    <property type="molecule type" value="Genomic_DNA"/>
</dbReference>
<dbReference type="PIR" id="S48416">
    <property type="entry name" value="S48416"/>
</dbReference>
<dbReference type="RefSeq" id="NP_012201.1">
    <property type="nucleotide sequence ID" value="NM_001179413.1"/>
</dbReference>
<dbReference type="PDB" id="3WYF">
    <property type="method" value="X-ray"/>
    <property type="resolution" value="2.22 A"/>
    <property type="chains" value="B/E=90-327"/>
</dbReference>
<dbReference type="PDBsum" id="3WYF"/>
<dbReference type="SMR" id="P40517"/>
<dbReference type="BioGRID" id="34929">
    <property type="interactions" value="51"/>
</dbReference>
<dbReference type="DIP" id="DIP-2243N"/>
<dbReference type="FunCoup" id="P40517">
    <property type="interactions" value="218"/>
</dbReference>
<dbReference type="IntAct" id="P40517">
    <property type="interactions" value="8"/>
</dbReference>
<dbReference type="MINT" id="P40517"/>
<dbReference type="STRING" id="4932.YIL063C"/>
<dbReference type="iPTMnet" id="P40517"/>
<dbReference type="PaxDb" id="4932-YIL063C"/>
<dbReference type="PeptideAtlas" id="P40517"/>
<dbReference type="EnsemblFungi" id="YIL063C_mRNA">
    <property type="protein sequence ID" value="YIL063C"/>
    <property type="gene ID" value="YIL063C"/>
</dbReference>
<dbReference type="GeneID" id="854747"/>
<dbReference type="KEGG" id="sce:YIL063C"/>
<dbReference type="AGR" id="SGD:S000001325"/>
<dbReference type="SGD" id="S000001325">
    <property type="gene designation" value="YRB2"/>
</dbReference>
<dbReference type="VEuPathDB" id="FungiDB:YIL063C"/>
<dbReference type="eggNOG" id="KOG0864">
    <property type="taxonomic scope" value="Eukaryota"/>
</dbReference>
<dbReference type="HOGENOM" id="CLU_052718_0_0_1"/>
<dbReference type="InParanoid" id="P40517"/>
<dbReference type="OMA" id="NMDKRGV"/>
<dbReference type="OrthoDB" id="411251at2759"/>
<dbReference type="BioCyc" id="YEAST:G3O-31331-MONOMER"/>
<dbReference type="Reactome" id="R-SCE-159236">
    <property type="pathway name" value="Transport of Mature mRNA derived from an Intron-Containing Transcript"/>
</dbReference>
<dbReference type="Reactome" id="R-SCE-3371453">
    <property type="pathway name" value="Regulation of HSF1-mediated heat shock response"/>
</dbReference>
<dbReference type="Reactome" id="R-SCE-4085377">
    <property type="pathway name" value="SUMOylation of SUMOylation proteins"/>
</dbReference>
<dbReference type="Reactome" id="R-SCE-4551638">
    <property type="pathway name" value="SUMOylation of chromatin organization proteins"/>
</dbReference>
<dbReference type="Reactome" id="R-SCE-4570464">
    <property type="pathway name" value="SUMOylation of RNA binding proteins"/>
</dbReference>
<dbReference type="BioGRID-ORCS" id="854747">
    <property type="hits" value="8 hits in 10 CRISPR screens"/>
</dbReference>
<dbReference type="EvolutionaryTrace" id="P40517"/>
<dbReference type="PRO" id="PR:P40517"/>
<dbReference type="Proteomes" id="UP000002311">
    <property type="component" value="Chromosome IX"/>
</dbReference>
<dbReference type="RNAct" id="P40517">
    <property type="molecule type" value="protein"/>
</dbReference>
<dbReference type="GO" id="GO:0005829">
    <property type="term" value="C:cytosol"/>
    <property type="evidence" value="ECO:0000314"/>
    <property type="project" value="SGD"/>
</dbReference>
<dbReference type="GO" id="GO:0005634">
    <property type="term" value="C:nucleus"/>
    <property type="evidence" value="ECO:0000314"/>
    <property type="project" value="SGD"/>
</dbReference>
<dbReference type="GO" id="GO:0005096">
    <property type="term" value="F:GTPase activator activity"/>
    <property type="evidence" value="ECO:0007669"/>
    <property type="project" value="UniProtKB-KW"/>
</dbReference>
<dbReference type="GO" id="GO:0006607">
    <property type="term" value="P:NLS-bearing protein import into nucleus"/>
    <property type="evidence" value="ECO:0000318"/>
    <property type="project" value="GO_Central"/>
</dbReference>
<dbReference type="GO" id="GO:0006611">
    <property type="term" value="P:protein export from nucleus"/>
    <property type="evidence" value="ECO:0000315"/>
    <property type="project" value="SGD"/>
</dbReference>
<dbReference type="GO" id="GO:0000056">
    <property type="term" value="P:ribosomal small subunit export from nucleus"/>
    <property type="evidence" value="ECO:0000315"/>
    <property type="project" value="SGD"/>
</dbReference>
<dbReference type="CDD" id="cd13180">
    <property type="entry name" value="RanBD_RanBP3"/>
    <property type="match status" value="1"/>
</dbReference>
<dbReference type="DisProt" id="DP01079"/>
<dbReference type="FunFam" id="2.30.29.30:FF:000454">
    <property type="entry name" value="Ran-specific GTPase-activating protein 2"/>
    <property type="match status" value="1"/>
</dbReference>
<dbReference type="Gene3D" id="2.30.29.30">
    <property type="entry name" value="Pleckstrin-homology domain (PH domain)/Phosphotyrosine-binding domain (PTB)"/>
    <property type="match status" value="1"/>
</dbReference>
<dbReference type="IDEAL" id="IID50276"/>
<dbReference type="InterPro" id="IPR011993">
    <property type="entry name" value="PH-like_dom_sf"/>
</dbReference>
<dbReference type="InterPro" id="IPR000156">
    <property type="entry name" value="Ran_bind_dom"/>
</dbReference>
<dbReference type="InterPro" id="IPR045255">
    <property type="entry name" value="RanBP1-like"/>
</dbReference>
<dbReference type="PANTHER" id="PTHR23138">
    <property type="entry name" value="RAN BINDING PROTEIN"/>
    <property type="match status" value="1"/>
</dbReference>
<dbReference type="PANTHER" id="PTHR23138:SF142">
    <property type="entry name" value="RAN-BINDING PROTEIN 3B-RELATED"/>
    <property type="match status" value="1"/>
</dbReference>
<dbReference type="Pfam" id="PF00638">
    <property type="entry name" value="Ran_BP1"/>
    <property type="match status" value="1"/>
</dbReference>
<dbReference type="SMART" id="SM00160">
    <property type="entry name" value="RanBD"/>
    <property type="match status" value="1"/>
</dbReference>
<dbReference type="SUPFAM" id="SSF50729">
    <property type="entry name" value="PH domain-like"/>
    <property type="match status" value="1"/>
</dbReference>
<dbReference type="PROSITE" id="PS50196">
    <property type="entry name" value="RANBD1"/>
    <property type="match status" value="1"/>
</dbReference>
<protein>
    <recommendedName>
        <fullName>Ran-specific GTPase-activating protein 2</fullName>
    </recommendedName>
    <alternativeName>
        <fullName>Ran-binding protein 2</fullName>
        <shortName>RANBP2</shortName>
    </alternativeName>
</protein>
<sequence>MSETNGGNAARENSEVKQTAVENPIDKLDGTPKRPREKDQDEQAEETSDKSEAPNKNDEEKKEEGKKDQEPSHKKIKVDDGKTVESGIVEDDKKEDKFVFGAASKFGTGFGVAKKDTKDGDATTSTESLPASDSKTKKPFAFGSGLSFGSGFNILKNKTENNSESEKKATDVDKDKVHSGSEQLANASEDTKDKPKPLKLQKQEVKSGEESEECIYQVNAKLYQLSNIKEGWKERGVGIIKINKSKDDVEKTRIVMRSRGILKVILNIQLVKGFTVQKGFTGSLQSEKFIRLLAVDDNGDPAQYAIKTGKKETTDELYNIIVKSVPK</sequence>
<accession>P40517</accession>
<accession>D6VVM1</accession>
<organism>
    <name type="scientific">Saccharomyces cerevisiae (strain ATCC 204508 / S288c)</name>
    <name type="common">Baker's yeast</name>
    <dbReference type="NCBI Taxonomy" id="559292"/>
    <lineage>
        <taxon>Eukaryota</taxon>
        <taxon>Fungi</taxon>
        <taxon>Dikarya</taxon>
        <taxon>Ascomycota</taxon>
        <taxon>Saccharomycotina</taxon>
        <taxon>Saccharomycetes</taxon>
        <taxon>Saccharomycetales</taxon>
        <taxon>Saccharomycetaceae</taxon>
        <taxon>Saccharomyces</taxon>
    </lineage>
</organism>
<feature type="chain" id="PRO_0000213671" description="Ran-specific GTPase-activating protein 2">
    <location>
        <begin position="1"/>
        <end position="327"/>
    </location>
</feature>
<feature type="domain" description="RanBD1" evidence="1">
    <location>
        <begin position="191"/>
        <end position="327"/>
    </location>
</feature>
<feature type="region of interest" description="Disordered" evidence="2">
    <location>
        <begin position="1"/>
        <end position="96"/>
    </location>
</feature>
<feature type="region of interest" description="Disordered" evidence="2">
    <location>
        <begin position="109"/>
        <end position="205"/>
    </location>
</feature>
<feature type="compositionally biased region" description="Basic and acidic residues" evidence="2">
    <location>
        <begin position="24"/>
        <end position="83"/>
    </location>
</feature>
<feature type="compositionally biased region" description="Polar residues" evidence="2">
    <location>
        <begin position="122"/>
        <end position="133"/>
    </location>
</feature>
<feature type="compositionally biased region" description="Low complexity" evidence="2">
    <location>
        <begin position="140"/>
        <end position="152"/>
    </location>
</feature>
<feature type="compositionally biased region" description="Basic and acidic residues" evidence="2">
    <location>
        <begin position="157"/>
        <end position="179"/>
    </location>
</feature>
<feature type="compositionally biased region" description="Basic and acidic residues" evidence="2">
    <location>
        <begin position="189"/>
        <end position="205"/>
    </location>
</feature>
<feature type="modified residue" description="Phosphothreonine" evidence="5">
    <location>
        <position position="31"/>
    </location>
</feature>
<feature type="modified residue" description="Phosphoserine" evidence="5">
    <location>
        <position position="179"/>
    </location>
</feature>
<feature type="strand" evidence="6">
    <location>
        <begin position="100"/>
        <end position="102"/>
    </location>
</feature>
<feature type="turn" evidence="6">
    <location>
        <begin position="142"/>
        <end position="145"/>
    </location>
</feature>
<feature type="helix" evidence="6">
    <location>
        <begin position="147"/>
        <end position="149"/>
    </location>
</feature>
<feature type="helix" evidence="6">
    <location>
        <begin position="152"/>
        <end position="154"/>
    </location>
</feature>
<feature type="strand" evidence="6">
    <location>
        <begin position="212"/>
        <end position="225"/>
    </location>
</feature>
<feature type="strand" evidence="6">
    <location>
        <begin position="232"/>
        <end position="244"/>
    </location>
</feature>
<feature type="strand" evidence="6">
    <location>
        <begin position="252"/>
        <end position="257"/>
    </location>
</feature>
<feature type="turn" evidence="6">
    <location>
        <begin position="259"/>
        <end position="261"/>
    </location>
</feature>
<feature type="strand" evidence="6">
    <location>
        <begin position="264"/>
        <end position="270"/>
    </location>
</feature>
<feature type="strand" evidence="6">
    <location>
        <begin position="276"/>
        <end position="278"/>
    </location>
</feature>
<feature type="strand" evidence="6">
    <location>
        <begin position="281"/>
        <end position="283"/>
    </location>
</feature>
<feature type="helix" evidence="6">
    <location>
        <begin position="286"/>
        <end position="288"/>
    </location>
</feature>
<feature type="strand" evidence="6">
    <location>
        <begin position="289"/>
        <end position="293"/>
    </location>
</feature>
<feature type="strand" evidence="6">
    <location>
        <begin position="303"/>
        <end position="307"/>
    </location>
</feature>
<feature type="helix" evidence="6">
    <location>
        <begin position="311"/>
        <end position="322"/>
    </location>
</feature>
<keyword id="KW-0002">3D-structure</keyword>
<keyword id="KW-0343">GTPase activation</keyword>
<keyword id="KW-0539">Nucleus</keyword>
<keyword id="KW-0597">Phosphoprotein</keyword>
<keyword id="KW-0653">Protein transport</keyword>
<keyword id="KW-1185">Reference proteome</keyword>
<keyword id="KW-0813">Transport</keyword>
<name>YRB2_YEAST</name>
<reference key="1">
    <citation type="journal article" date="1997" name="Nature">
        <title>The nucleotide sequence of Saccharomyces cerevisiae chromosome IX.</title>
        <authorList>
            <person name="Churcher C.M."/>
            <person name="Bowman S."/>
            <person name="Badcock K."/>
            <person name="Bankier A.T."/>
            <person name="Brown D."/>
            <person name="Chillingworth T."/>
            <person name="Connor R."/>
            <person name="Devlin K."/>
            <person name="Gentles S."/>
            <person name="Hamlin N."/>
            <person name="Harris D.E."/>
            <person name="Horsnell T."/>
            <person name="Hunt S."/>
            <person name="Jagels K."/>
            <person name="Jones M."/>
            <person name="Lye G."/>
            <person name="Moule S."/>
            <person name="Odell C."/>
            <person name="Pearson D."/>
            <person name="Rajandream M.A."/>
            <person name="Rice P."/>
            <person name="Rowley N."/>
            <person name="Skelton J."/>
            <person name="Smith V."/>
            <person name="Walsh S.V."/>
            <person name="Whitehead S."/>
            <person name="Barrell B.G."/>
        </authorList>
    </citation>
    <scope>NUCLEOTIDE SEQUENCE [LARGE SCALE GENOMIC DNA]</scope>
    <source>
        <strain>ATCC 204508 / S288c</strain>
    </source>
</reference>
<reference key="2">
    <citation type="journal article" date="2014" name="G3 (Bethesda)">
        <title>The reference genome sequence of Saccharomyces cerevisiae: Then and now.</title>
        <authorList>
            <person name="Engel S.R."/>
            <person name="Dietrich F.S."/>
            <person name="Fisk D.G."/>
            <person name="Binkley G."/>
            <person name="Balakrishnan R."/>
            <person name="Costanzo M.C."/>
            <person name="Dwight S.S."/>
            <person name="Hitz B.C."/>
            <person name="Karra K."/>
            <person name="Nash R.S."/>
            <person name="Weng S."/>
            <person name="Wong E.D."/>
            <person name="Lloyd P."/>
            <person name="Skrzypek M.S."/>
            <person name="Miyasato S.R."/>
            <person name="Simison M."/>
            <person name="Cherry J.M."/>
        </authorList>
    </citation>
    <scope>GENOME REANNOTATION</scope>
    <source>
        <strain>ATCC 204508 / S288c</strain>
    </source>
</reference>
<reference key="3">
    <citation type="journal article" date="2007" name="Genome Res.">
        <title>Approaching a complete repository of sequence-verified protein-encoding clones for Saccharomyces cerevisiae.</title>
        <authorList>
            <person name="Hu Y."/>
            <person name="Rolfs A."/>
            <person name="Bhullar B."/>
            <person name="Murthy T.V.S."/>
            <person name="Zhu C."/>
            <person name="Berger M.F."/>
            <person name="Camargo A.A."/>
            <person name="Kelley F."/>
            <person name="McCarron S."/>
            <person name="Jepson D."/>
            <person name="Richardson A."/>
            <person name="Raphael J."/>
            <person name="Moreira D."/>
            <person name="Taycher E."/>
            <person name="Zuo D."/>
            <person name="Mohr S."/>
            <person name="Kane M.F."/>
            <person name="Williamson J."/>
            <person name="Simpson A.J.G."/>
            <person name="Bulyk M.L."/>
            <person name="Harlow E."/>
            <person name="Marsischky G."/>
            <person name="Kolodner R.D."/>
            <person name="LaBaer J."/>
        </authorList>
    </citation>
    <scope>NUCLEOTIDE SEQUENCE [GENOMIC DNA]</scope>
    <source>
        <strain>ATCC 204508 / S288c</strain>
    </source>
</reference>
<reference key="4">
    <citation type="journal article" date="1997" name="J. Biol. Chem.">
        <title>Yrb2p is a nuclear protein that interacts with Prp20p, a yeast Rcc1 homologue.</title>
        <authorList>
            <person name="Taura T."/>
            <person name="Schlenstedt G."/>
            <person name="Silver P.A."/>
        </authorList>
    </citation>
    <scope>FUNCTION</scope>
    <scope>SUBCELLULAR LOCATION</scope>
    <scope>INTERACTION WITH SRM1</scope>
</reference>
<reference key="5">
    <citation type="journal article" date="1998" name="Proc. Natl. Acad. Sci. U.S.A.">
        <title>A member of the Ran-binding protein family, Yrb2p, is involved in nuclear protein export.</title>
        <authorList>
            <person name="Taura T."/>
            <person name="Krebber H."/>
            <person name="Silver P.A."/>
        </authorList>
    </citation>
    <scope>CHARACTERIZATION</scope>
</reference>
<reference key="6">
    <citation type="journal article" date="2003" name="Nature">
        <title>Global analysis of protein expression in yeast.</title>
        <authorList>
            <person name="Ghaemmaghami S."/>
            <person name="Huh W.-K."/>
            <person name="Bower K."/>
            <person name="Howson R.W."/>
            <person name="Belle A."/>
            <person name="Dephoure N."/>
            <person name="O'Shea E.K."/>
            <person name="Weissman J.S."/>
        </authorList>
    </citation>
    <scope>LEVEL OF PROTEIN EXPRESSION [LARGE SCALE ANALYSIS]</scope>
</reference>
<reference key="7">
    <citation type="journal article" date="2007" name="J. Proteome Res.">
        <title>Large-scale phosphorylation analysis of alpha-factor-arrested Saccharomyces cerevisiae.</title>
        <authorList>
            <person name="Li X."/>
            <person name="Gerber S.A."/>
            <person name="Rudner A.D."/>
            <person name="Beausoleil S.A."/>
            <person name="Haas W."/>
            <person name="Villen J."/>
            <person name="Elias J.E."/>
            <person name="Gygi S.P."/>
        </authorList>
    </citation>
    <scope>IDENTIFICATION BY MASS SPECTROMETRY [LARGE SCALE ANALYSIS]</scope>
    <source>
        <strain>ADR376</strain>
    </source>
</reference>
<reference key="8">
    <citation type="journal article" date="2008" name="Mol. Cell. Proteomics">
        <title>A multidimensional chromatography technology for in-depth phosphoproteome analysis.</title>
        <authorList>
            <person name="Albuquerque C.P."/>
            <person name="Smolka M.B."/>
            <person name="Payne S.H."/>
            <person name="Bafna V."/>
            <person name="Eng J."/>
            <person name="Zhou H."/>
        </authorList>
    </citation>
    <scope>PHOSPHORYLATION [LARGE SCALE ANALYSIS] AT THR-31 AND SER-179</scope>
    <scope>IDENTIFICATION BY MASS SPECTROMETRY [LARGE SCALE ANALYSIS]</scope>
</reference>
<reference key="9">
    <citation type="journal article" date="2009" name="Science">
        <title>Global analysis of Cdk1 substrate phosphorylation sites provides insights into evolution.</title>
        <authorList>
            <person name="Holt L.J."/>
            <person name="Tuch B.B."/>
            <person name="Villen J."/>
            <person name="Johnson A.D."/>
            <person name="Gygi S.P."/>
            <person name="Morgan D.O."/>
        </authorList>
    </citation>
    <scope>IDENTIFICATION BY MASS SPECTROMETRY [LARGE SCALE ANALYSIS]</scope>
</reference>
<proteinExistence type="evidence at protein level"/>
<comment type="function">
    <text evidence="4">Important for the export of protein containing nuclear export signal (NES) out of the nucleus. Stimulates the GTPase activity of GSP1.</text>
</comment>
<comment type="subunit">
    <text evidence="4">Interacts with GSP1, XPO1 and SRM1.</text>
</comment>
<comment type="subcellular location">
    <subcellularLocation>
        <location evidence="4">Nucleus</location>
    </subcellularLocation>
</comment>
<comment type="domain">
    <text>Contains X-F-X-F-G repeats.</text>
</comment>
<comment type="miscellaneous">
    <text evidence="3">Present with 3620 molecules/cell in log phase SD medium.</text>
</comment>